<evidence type="ECO:0000255" key="1">
    <source>
        <dbReference type="HAMAP-Rule" id="MF_00347"/>
    </source>
</evidence>
<protein>
    <recommendedName>
        <fullName evidence="1">Polyphosphate kinase</fullName>
        <ecNumber evidence="1">2.7.4.1</ecNumber>
    </recommendedName>
    <alternativeName>
        <fullName evidence="1">ATP-polyphosphate phosphotransferase</fullName>
    </alternativeName>
    <alternativeName>
        <fullName evidence="1">Polyphosphoric acid kinase</fullName>
    </alternativeName>
</protein>
<accession>Q4L8X9</accession>
<gene>
    <name evidence="1" type="primary">ppk</name>
    <name type="ordered locus">SH0587</name>
</gene>
<sequence>MQTQLGENDISLPQYYNNRELSWLDFNYRVLQEAYDKNNPLLEKLNFISIFSSNLDEFFMVRVAGLKDQVKMGYDKPENKAQMTPQEQVDAIQEKAKKYVDTQYERYNELMIELKDYEIVMCEPHELSEPLLSKLERDFKLTILPTLTPLGIDAYHPFPKLNNKSLNIFVDIDTEDAINSAIVQIPSLIPRFLTYNEGAKQYVVMVEDVITYFINYLFTGYEVLNTFTFRITRNADLTIHEDGAEDLLIEIERFLKERKSGSAVRLEVDGRTENPDDLDWLIETLEVDKQDVYFLNGPLDLTFIFGLVDHLSHKLNYLTYEKYSPQIPRSLGNNNLYELALKRDIFFHHPYESFEPIVDFIREAADDPNTIAIKQTLYRVSKDSPIIKSLKEAAEKGKQVTVLVELKARFDEENNVHWARMLEDAGCHVIYGMTHLKTHSKIALVVKRIGGELTSFVHLGTGNYNDKTAKLYTDMGIITTNEQIAEDAINFFNYLSGYSVKPEYNKLIVAPFDIRDVFIDRIDKEISSHLQHGNGKIMMKMNSLTDKAIIEKLFEASQAGVKIQLIIRGICCLKPGIPGISENIEVVSIVGRLLEHSRIYYFHNNGDERIYLSSADVMTRNMIKRVEILFPVEDKEIGKRLVDFMDLQLSDNQKGRYQDEHGHYHYVENNLSPLNSQVYLMQEAIKYGQELKKRSAQPSGMPVVSKRRANWMNRIRRSLKK</sequence>
<reference key="1">
    <citation type="journal article" date="2005" name="J. Bacteriol.">
        <title>Whole-genome sequencing of Staphylococcus haemolyticus uncovers the extreme plasticity of its genome and the evolution of human-colonizing staphylococcal species.</title>
        <authorList>
            <person name="Takeuchi F."/>
            <person name="Watanabe S."/>
            <person name="Baba T."/>
            <person name="Yuzawa H."/>
            <person name="Ito T."/>
            <person name="Morimoto Y."/>
            <person name="Kuroda M."/>
            <person name="Cui L."/>
            <person name="Takahashi M."/>
            <person name="Ankai A."/>
            <person name="Baba S."/>
            <person name="Fukui S."/>
            <person name="Lee J.C."/>
            <person name="Hiramatsu K."/>
        </authorList>
    </citation>
    <scope>NUCLEOTIDE SEQUENCE [LARGE SCALE GENOMIC DNA]</scope>
    <source>
        <strain>JCSC1435</strain>
    </source>
</reference>
<feature type="chain" id="PRO_0000128659" description="Polyphosphate kinase">
    <location>
        <begin position="1"/>
        <end position="721"/>
    </location>
</feature>
<feature type="domain" description="PLD phosphodiesterase" evidence="1">
    <location>
        <begin position="434"/>
        <end position="468"/>
    </location>
</feature>
<feature type="active site" description="Phosphohistidine intermediate" evidence="1">
    <location>
        <position position="439"/>
    </location>
</feature>
<feature type="binding site" evidence="1">
    <location>
        <position position="54"/>
    </location>
    <ligand>
        <name>ATP</name>
        <dbReference type="ChEBI" id="CHEBI:30616"/>
    </ligand>
</feature>
<feature type="binding site" evidence="1">
    <location>
        <position position="379"/>
    </location>
    <ligand>
        <name>Mg(2+)</name>
        <dbReference type="ChEBI" id="CHEBI:18420"/>
    </ligand>
</feature>
<feature type="binding site" evidence="1">
    <location>
        <position position="409"/>
    </location>
    <ligand>
        <name>Mg(2+)</name>
        <dbReference type="ChEBI" id="CHEBI:18420"/>
    </ligand>
</feature>
<feature type="binding site" evidence="1">
    <location>
        <position position="472"/>
    </location>
    <ligand>
        <name>ATP</name>
        <dbReference type="ChEBI" id="CHEBI:30616"/>
    </ligand>
</feature>
<feature type="binding site" evidence="1">
    <location>
        <position position="568"/>
    </location>
    <ligand>
        <name>ATP</name>
        <dbReference type="ChEBI" id="CHEBI:30616"/>
    </ligand>
</feature>
<feature type="binding site" evidence="1">
    <location>
        <position position="596"/>
    </location>
    <ligand>
        <name>ATP</name>
        <dbReference type="ChEBI" id="CHEBI:30616"/>
    </ligand>
</feature>
<dbReference type="EC" id="2.7.4.1" evidence="1"/>
<dbReference type="EMBL" id="AP006716">
    <property type="protein sequence ID" value="BAE03896.1"/>
    <property type="molecule type" value="Genomic_DNA"/>
</dbReference>
<dbReference type="RefSeq" id="WP_011274912.1">
    <property type="nucleotide sequence ID" value="NC_007168.1"/>
</dbReference>
<dbReference type="SMR" id="Q4L8X9"/>
<dbReference type="KEGG" id="sha:SH0587"/>
<dbReference type="eggNOG" id="COG0855">
    <property type="taxonomic scope" value="Bacteria"/>
</dbReference>
<dbReference type="HOGENOM" id="CLU_009678_5_0_9"/>
<dbReference type="OrthoDB" id="9761456at2"/>
<dbReference type="Proteomes" id="UP000000543">
    <property type="component" value="Chromosome"/>
</dbReference>
<dbReference type="GO" id="GO:0009358">
    <property type="term" value="C:polyphosphate kinase complex"/>
    <property type="evidence" value="ECO:0007669"/>
    <property type="project" value="InterPro"/>
</dbReference>
<dbReference type="GO" id="GO:0005524">
    <property type="term" value="F:ATP binding"/>
    <property type="evidence" value="ECO:0007669"/>
    <property type="project" value="UniProtKB-KW"/>
</dbReference>
<dbReference type="GO" id="GO:0046872">
    <property type="term" value="F:metal ion binding"/>
    <property type="evidence" value="ECO:0007669"/>
    <property type="project" value="UniProtKB-KW"/>
</dbReference>
<dbReference type="GO" id="GO:0008976">
    <property type="term" value="F:polyphosphate kinase activity"/>
    <property type="evidence" value="ECO:0007669"/>
    <property type="project" value="UniProtKB-UniRule"/>
</dbReference>
<dbReference type="GO" id="GO:0006799">
    <property type="term" value="P:polyphosphate biosynthetic process"/>
    <property type="evidence" value="ECO:0007669"/>
    <property type="project" value="UniProtKB-UniRule"/>
</dbReference>
<dbReference type="CDD" id="cd09165">
    <property type="entry name" value="PLDc_PaPPK1_C1_like"/>
    <property type="match status" value="1"/>
</dbReference>
<dbReference type="CDD" id="cd09168">
    <property type="entry name" value="PLDc_PaPPK1_C2_like"/>
    <property type="match status" value="1"/>
</dbReference>
<dbReference type="Gene3D" id="3.30.870.10">
    <property type="entry name" value="Endonuclease Chain A"/>
    <property type="match status" value="2"/>
</dbReference>
<dbReference type="Gene3D" id="3.30.1840.10">
    <property type="entry name" value="Polyphosphate kinase middle domain"/>
    <property type="match status" value="1"/>
</dbReference>
<dbReference type="Gene3D" id="1.20.58.310">
    <property type="entry name" value="Polyphosphate kinase N-terminal domain"/>
    <property type="match status" value="1"/>
</dbReference>
<dbReference type="HAMAP" id="MF_00347">
    <property type="entry name" value="Polyphosphate_kinase"/>
    <property type="match status" value="1"/>
</dbReference>
<dbReference type="InterPro" id="IPR003414">
    <property type="entry name" value="PP_kinase"/>
</dbReference>
<dbReference type="InterPro" id="IPR041108">
    <property type="entry name" value="PP_kinase_C_1"/>
</dbReference>
<dbReference type="InterPro" id="IPR024953">
    <property type="entry name" value="PP_kinase_middle"/>
</dbReference>
<dbReference type="InterPro" id="IPR036830">
    <property type="entry name" value="PP_kinase_middle_dom_sf"/>
</dbReference>
<dbReference type="InterPro" id="IPR025200">
    <property type="entry name" value="PPK_C_dom2"/>
</dbReference>
<dbReference type="InterPro" id="IPR025198">
    <property type="entry name" value="PPK_N_dom"/>
</dbReference>
<dbReference type="InterPro" id="IPR036832">
    <property type="entry name" value="PPK_N_dom_sf"/>
</dbReference>
<dbReference type="NCBIfam" id="TIGR03705">
    <property type="entry name" value="poly_P_kin"/>
    <property type="match status" value="1"/>
</dbReference>
<dbReference type="NCBIfam" id="NF003917">
    <property type="entry name" value="PRK05443.1-1"/>
    <property type="match status" value="1"/>
</dbReference>
<dbReference type="NCBIfam" id="NF003918">
    <property type="entry name" value="PRK05443.1-2"/>
    <property type="match status" value="1"/>
</dbReference>
<dbReference type="NCBIfam" id="NF003920">
    <property type="entry name" value="PRK05443.2-1"/>
    <property type="match status" value="1"/>
</dbReference>
<dbReference type="NCBIfam" id="NF003921">
    <property type="entry name" value="PRK05443.2-2"/>
    <property type="match status" value="1"/>
</dbReference>
<dbReference type="PANTHER" id="PTHR30218">
    <property type="entry name" value="POLYPHOSPHATE KINASE"/>
    <property type="match status" value="1"/>
</dbReference>
<dbReference type="PANTHER" id="PTHR30218:SF0">
    <property type="entry name" value="POLYPHOSPHATE KINASE"/>
    <property type="match status" value="1"/>
</dbReference>
<dbReference type="Pfam" id="PF02503">
    <property type="entry name" value="PP_kinase"/>
    <property type="match status" value="1"/>
</dbReference>
<dbReference type="Pfam" id="PF13090">
    <property type="entry name" value="PP_kinase_C"/>
    <property type="match status" value="1"/>
</dbReference>
<dbReference type="Pfam" id="PF17941">
    <property type="entry name" value="PP_kinase_C_1"/>
    <property type="match status" value="1"/>
</dbReference>
<dbReference type="Pfam" id="PF13089">
    <property type="entry name" value="PP_kinase_N"/>
    <property type="match status" value="1"/>
</dbReference>
<dbReference type="PIRSF" id="PIRSF015589">
    <property type="entry name" value="PP_kinase"/>
    <property type="match status" value="1"/>
</dbReference>
<dbReference type="SUPFAM" id="SSF56024">
    <property type="entry name" value="Phospholipase D/nuclease"/>
    <property type="match status" value="2"/>
</dbReference>
<dbReference type="SUPFAM" id="SSF143724">
    <property type="entry name" value="PHP14-like"/>
    <property type="match status" value="1"/>
</dbReference>
<dbReference type="SUPFAM" id="SSF140356">
    <property type="entry name" value="PPK N-terminal domain-like"/>
    <property type="match status" value="1"/>
</dbReference>
<comment type="function">
    <text evidence="1">Catalyzes the reversible transfer of the terminal phosphate of ATP to form a long-chain polyphosphate (polyP).</text>
</comment>
<comment type="catalytic activity">
    <reaction evidence="1">
        <text>[phosphate](n) + ATP = [phosphate](n+1) + ADP</text>
        <dbReference type="Rhea" id="RHEA:19573"/>
        <dbReference type="Rhea" id="RHEA-COMP:9859"/>
        <dbReference type="Rhea" id="RHEA-COMP:14280"/>
        <dbReference type="ChEBI" id="CHEBI:16838"/>
        <dbReference type="ChEBI" id="CHEBI:30616"/>
        <dbReference type="ChEBI" id="CHEBI:456216"/>
        <dbReference type="EC" id="2.7.4.1"/>
    </reaction>
</comment>
<comment type="cofactor">
    <cofactor evidence="1">
        <name>Mg(2+)</name>
        <dbReference type="ChEBI" id="CHEBI:18420"/>
    </cofactor>
</comment>
<comment type="PTM">
    <text evidence="1">An intermediate of this reaction is the autophosphorylated ppk in which a phosphate is covalently linked to a histidine residue through a N-P bond.</text>
</comment>
<comment type="similarity">
    <text evidence="1">Belongs to the polyphosphate kinase 1 (PPK1) family.</text>
</comment>
<proteinExistence type="inferred from homology"/>
<organism>
    <name type="scientific">Staphylococcus haemolyticus (strain JCSC1435)</name>
    <dbReference type="NCBI Taxonomy" id="279808"/>
    <lineage>
        <taxon>Bacteria</taxon>
        <taxon>Bacillati</taxon>
        <taxon>Bacillota</taxon>
        <taxon>Bacilli</taxon>
        <taxon>Bacillales</taxon>
        <taxon>Staphylococcaceae</taxon>
        <taxon>Staphylococcus</taxon>
    </lineage>
</organism>
<keyword id="KW-0067">ATP-binding</keyword>
<keyword id="KW-0418">Kinase</keyword>
<keyword id="KW-0460">Magnesium</keyword>
<keyword id="KW-0479">Metal-binding</keyword>
<keyword id="KW-0547">Nucleotide-binding</keyword>
<keyword id="KW-0597">Phosphoprotein</keyword>
<keyword id="KW-0808">Transferase</keyword>
<name>PPK1_STAHJ</name>